<organism>
    <name type="scientific">Prosthecochloris aestuarii (strain DSM 271 / SK 413)</name>
    <dbReference type="NCBI Taxonomy" id="290512"/>
    <lineage>
        <taxon>Bacteria</taxon>
        <taxon>Pseudomonadati</taxon>
        <taxon>Chlorobiota</taxon>
        <taxon>Chlorobiia</taxon>
        <taxon>Chlorobiales</taxon>
        <taxon>Chlorobiaceae</taxon>
        <taxon>Prosthecochloris</taxon>
    </lineage>
</organism>
<feature type="chain" id="PRO_1000093812" description="Translation initiation factor IF-2">
    <location>
        <begin position="1"/>
        <end position="936"/>
    </location>
</feature>
<feature type="domain" description="tr-type G">
    <location>
        <begin position="433"/>
        <end position="603"/>
    </location>
</feature>
<feature type="region of interest" description="Disordered" evidence="3">
    <location>
        <begin position="102"/>
        <end position="332"/>
    </location>
</feature>
<feature type="region of interest" description="G1" evidence="1">
    <location>
        <begin position="442"/>
        <end position="449"/>
    </location>
</feature>
<feature type="region of interest" description="G2" evidence="1">
    <location>
        <begin position="467"/>
        <end position="471"/>
    </location>
</feature>
<feature type="region of interest" description="G3" evidence="1">
    <location>
        <begin position="489"/>
        <end position="492"/>
    </location>
</feature>
<feature type="region of interest" description="G4" evidence="1">
    <location>
        <begin position="543"/>
        <end position="546"/>
    </location>
</feature>
<feature type="region of interest" description="G5" evidence="1">
    <location>
        <begin position="579"/>
        <end position="581"/>
    </location>
</feature>
<feature type="compositionally biased region" description="Basic and acidic residues" evidence="3">
    <location>
        <begin position="108"/>
        <end position="119"/>
    </location>
</feature>
<feature type="compositionally biased region" description="Acidic residues" evidence="3">
    <location>
        <begin position="127"/>
        <end position="137"/>
    </location>
</feature>
<feature type="compositionally biased region" description="Low complexity" evidence="3">
    <location>
        <begin position="151"/>
        <end position="160"/>
    </location>
</feature>
<feature type="compositionally biased region" description="Polar residues" evidence="3">
    <location>
        <begin position="182"/>
        <end position="194"/>
    </location>
</feature>
<feature type="compositionally biased region" description="Basic and acidic residues" evidence="3">
    <location>
        <begin position="217"/>
        <end position="227"/>
    </location>
</feature>
<feature type="compositionally biased region" description="Basic and acidic residues" evidence="3">
    <location>
        <begin position="237"/>
        <end position="267"/>
    </location>
</feature>
<feature type="compositionally biased region" description="Low complexity" evidence="3">
    <location>
        <begin position="272"/>
        <end position="281"/>
    </location>
</feature>
<feature type="compositionally biased region" description="Basic residues" evidence="3">
    <location>
        <begin position="287"/>
        <end position="297"/>
    </location>
</feature>
<feature type="binding site" evidence="2">
    <location>
        <begin position="442"/>
        <end position="449"/>
    </location>
    <ligand>
        <name>GTP</name>
        <dbReference type="ChEBI" id="CHEBI:37565"/>
    </ligand>
</feature>
<feature type="binding site" evidence="2">
    <location>
        <begin position="489"/>
        <end position="493"/>
    </location>
    <ligand>
        <name>GTP</name>
        <dbReference type="ChEBI" id="CHEBI:37565"/>
    </ligand>
</feature>
<feature type="binding site" evidence="2">
    <location>
        <begin position="543"/>
        <end position="546"/>
    </location>
    <ligand>
        <name>GTP</name>
        <dbReference type="ChEBI" id="CHEBI:37565"/>
    </ligand>
</feature>
<keyword id="KW-0963">Cytoplasm</keyword>
<keyword id="KW-0342">GTP-binding</keyword>
<keyword id="KW-0396">Initiation factor</keyword>
<keyword id="KW-0547">Nucleotide-binding</keyword>
<keyword id="KW-0648">Protein biosynthesis</keyword>
<comment type="function">
    <text evidence="2">One of the essential components for the initiation of protein synthesis. Protects formylmethionyl-tRNA from spontaneous hydrolysis and promotes its binding to the 30S ribosomal subunits. Also involved in the hydrolysis of GTP during the formation of the 70S ribosomal complex.</text>
</comment>
<comment type="subcellular location">
    <subcellularLocation>
        <location evidence="2">Cytoplasm</location>
    </subcellularLocation>
</comment>
<comment type="similarity">
    <text evidence="2">Belongs to the TRAFAC class translation factor GTPase superfamily. Classic translation factor GTPase family. IF-2 subfamily.</text>
</comment>
<dbReference type="EMBL" id="CP001108">
    <property type="protein sequence ID" value="ACF45424.1"/>
    <property type="molecule type" value="Genomic_DNA"/>
</dbReference>
<dbReference type="RefSeq" id="WP_012504961.1">
    <property type="nucleotide sequence ID" value="NC_011059.1"/>
</dbReference>
<dbReference type="SMR" id="B4S4S6"/>
<dbReference type="STRING" id="290512.Paes_0367"/>
<dbReference type="KEGG" id="paa:Paes_0367"/>
<dbReference type="eggNOG" id="COG0532">
    <property type="taxonomic scope" value="Bacteria"/>
</dbReference>
<dbReference type="HOGENOM" id="CLU_006301_0_1_10"/>
<dbReference type="Proteomes" id="UP000002725">
    <property type="component" value="Chromosome"/>
</dbReference>
<dbReference type="GO" id="GO:0005737">
    <property type="term" value="C:cytoplasm"/>
    <property type="evidence" value="ECO:0007669"/>
    <property type="project" value="UniProtKB-SubCell"/>
</dbReference>
<dbReference type="GO" id="GO:0005525">
    <property type="term" value="F:GTP binding"/>
    <property type="evidence" value="ECO:0007669"/>
    <property type="project" value="UniProtKB-KW"/>
</dbReference>
<dbReference type="GO" id="GO:0003924">
    <property type="term" value="F:GTPase activity"/>
    <property type="evidence" value="ECO:0007669"/>
    <property type="project" value="UniProtKB-UniRule"/>
</dbReference>
<dbReference type="GO" id="GO:0003743">
    <property type="term" value="F:translation initiation factor activity"/>
    <property type="evidence" value="ECO:0007669"/>
    <property type="project" value="UniProtKB-UniRule"/>
</dbReference>
<dbReference type="CDD" id="cd01887">
    <property type="entry name" value="IF2_eIF5B"/>
    <property type="match status" value="1"/>
</dbReference>
<dbReference type="CDD" id="cd03702">
    <property type="entry name" value="IF2_mtIF2_II"/>
    <property type="match status" value="1"/>
</dbReference>
<dbReference type="CDD" id="cd03692">
    <property type="entry name" value="mtIF2_IVc"/>
    <property type="match status" value="1"/>
</dbReference>
<dbReference type="FunFam" id="2.40.30.10:FF:000007">
    <property type="entry name" value="Translation initiation factor IF-2"/>
    <property type="match status" value="1"/>
</dbReference>
<dbReference type="FunFam" id="2.40.30.10:FF:000008">
    <property type="entry name" value="Translation initiation factor IF-2"/>
    <property type="match status" value="1"/>
</dbReference>
<dbReference type="FunFam" id="3.40.50.10050:FF:000001">
    <property type="entry name" value="Translation initiation factor IF-2"/>
    <property type="match status" value="1"/>
</dbReference>
<dbReference type="FunFam" id="3.40.50.300:FF:000019">
    <property type="entry name" value="Translation initiation factor IF-2"/>
    <property type="match status" value="1"/>
</dbReference>
<dbReference type="Gene3D" id="1.10.10.2480">
    <property type="match status" value="1"/>
</dbReference>
<dbReference type="Gene3D" id="3.40.50.300">
    <property type="entry name" value="P-loop containing nucleotide triphosphate hydrolases"/>
    <property type="match status" value="1"/>
</dbReference>
<dbReference type="Gene3D" id="2.40.30.10">
    <property type="entry name" value="Translation factors"/>
    <property type="match status" value="2"/>
</dbReference>
<dbReference type="Gene3D" id="3.40.50.10050">
    <property type="entry name" value="Translation initiation factor IF- 2, domain 3"/>
    <property type="match status" value="1"/>
</dbReference>
<dbReference type="HAMAP" id="MF_00100_B">
    <property type="entry name" value="IF_2_B"/>
    <property type="match status" value="1"/>
</dbReference>
<dbReference type="InterPro" id="IPR053905">
    <property type="entry name" value="EF-G-like_DII"/>
</dbReference>
<dbReference type="InterPro" id="IPR044145">
    <property type="entry name" value="IF2_II"/>
</dbReference>
<dbReference type="InterPro" id="IPR006847">
    <property type="entry name" value="IF2_N"/>
</dbReference>
<dbReference type="InterPro" id="IPR027417">
    <property type="entry name" value="P-loop_NTPase"/>
</dbReference>
<dbReference type="InterPro" id="IPR005225">
    <property type="entry name" value="Small_GTP-bd"/>
</dbReference>
<dbReference type="InterPro" id="IPR000795">
    <property type="entry name" value="T_Tr_GTP-bd_dom"/>
</dbReference>
<dbReference type="InterPro" id="IPR000178">
    <property type="entry name" value="TF_IF2_bacterial-like"/>
</dbReference>
<dbReference type="InterPro" id="IPR015760">
    <property type="entry name" value="TIF_IF2"/>
</dbReference>
<dbReference type="InterPro" id="IPR023115">
    <property type="entry name" value="TIF_IF2_dom3"/>
</dbReference>
<dbReference type="InterPro" id="IPR036925">
    <property type="entry name" value="TIF_IF2_dom3_sf"/>
</dbReference>
<dbReference type="InterPro" id="IPR009000">
    <property type="entry name" value="Transl_B-barrel_sf"/>
</dbReference>
<dbReference type="NCBIfam" id="TIGR00487">
    <property type="entry name" value="IF-2"/>
    <property type="match status" value="1"/>
</dbReference>
<dbReference type="NCBIfam" id="TIGR00231">
    <property type="entry name" value="small_GTP"/>
    <property type="match status" value="1"/>
</dbReference>
<dbReference type="PANTHER" id="PTHR43381:SF5">
    <property type="entry name" value="TR-TYPE G DOMAIN-CONTAINING PROTEIN"/>
    <property type="match status" value="1"/>
</dbReference>
<dbReference type="PANTHER" id="PTHR43381">
    <property type="entry name" value="TRANSLATION INITIATION FACTOR IF-2-RELATED"/>
    <property type="match status" value="1"/>
</dbReference>
<dbReference type="Pfam" id="PF22042">
    <property type="entry name" value="EF-G_D2"/>
    <property type="match status" value="1"/>
</dbReference>
<dbReference type="Pfam" id="PF00009">
    <property type="entry name" value="GTP_EFTU"/>
    <property type="match status" value="1"/>
</dbReference>
<dbReference type="Pfam" id="PF11987">
    <property type="entry name" value="IF-2"/>
    <property type="match status" value="1"/>
</dbReference>
<dbReference type="Pfam" id="PF04760">
    <property type="entry name" value="IF2_N"/>
    <property type="match status" value="1"/>
</dbReference>
<dbReference type="SUPFAM" id="SSF52156">
    <property type="entry name" value="Initiation factor IF2/eIF5b, domain 3"/>
    <property type="match status" value="1"/>
</dbReference>
<dbReference type="SUPFAM" id="SSF52540">
    <property type="entry name" value="P-loop containing nucleoside triphosphate hydrolases"/>
    <property type="match status" value="1"/>
</dbReference>
<dbReference type="SUPFAM" id="SSF50447">
    <property type="entry name" value="Translation proteins"/>
    <property type="match status" value="2"/>
</dbReference>
<dbReference type="PROSITE" id="PS51722">
    <property type="entry name" value="G_TR_2"/>
    <property type="match status" value="1"/>
</dbReference>
<dbReference type="PROSITE" id="PS01176">
    <property type="entry name" value="IF2"/>
    <property type="match status" value="1"/>
</dbReference>
<gene>
    <name evidence="2" type="primary">infB</name>
    <name type="ordered locus">Paes_0367</name>
</gene>
<name>IF2_PROA2</name>
<reference key="1">
    <citation type="submission" date="2008-06" db="EMBL/GenBank/DDBJ databases">
        <title>Complete sequence of chromosome of Prosthecochloris aestuarii DSM 271.</title>
        <authorList>
            <consortium name="US DOE Joint Genome Institute"/>
            <person name="Lucas S."/>
            <person name="Copeland A."/>
            <person name="Lapidus A."/>
            <person name="Glavina del Rio T."/>
            <person name="Dalin E."/>
            <person name="Tice H."/>
            <person name="Bruce D."/>
            <person name="Goodwin L."/>
            <person name="Pitluck S."/>
            <person name="Schmutz J."/>
            <person name="Larimer F."/>
            <person name="Land M."/>
            <person name="Hauser L."/>
            <person name="Kyrpides N."/>
            <person name="Anderson I."/>
            <person name="Liu Z."/>
            <person name="Li T."/>
            <person name="Zhao F."/>
            <person name="Overmann J."/>
            <person name="Bryant D.A."/>
            <person name="Richardson P."/>
        </authorList>
    </citation>
    <scope>NUCLEOTIDE SEQUENCE [LARGE SCALE GENOMIC DNA]</scope>
    <source>
        <strain>DSM 271 / SK 413</strain>
    </source>
</reference>
<sequence>MSLEEKEMKYRISDIARELQVSPQEVLHFVKQEGAKVASTSSMVKSDMRELILGHFSDEKRLVDQTRKIREEKRQRLTRLEEQSRKTYEKEQQLKDSIAVFPEPGPVLKKDHVHEEPEKPAIVISESEPEVEPEVEPEQPAAAQEAEEAVPTEAVSVPEPVEQERVVPAPEKPEAEKPVPEQSSTMKAQASPEMQVTYEKPKNIGGLTVLGSIDVRSALDRGSESDRKKKNRKKRFKEQADELKGEFENAGKAEGDKKPAKSGEAKTKAPKKAAGTTGSAAEDTTSSKKKKGGKKKKPAVDEKVISQNIRSTISGMDDSSGGSGSRQKFRKMRKIEREKELEAAEAVKEAERSIVRVTEFATAHELADLMGITAKEIIQRCFTLGKFVTINQRLDKETIELVALEFGFEAEFVSEVEATEVFEVHDDSEDLEIRPPVVTIMGHVDHGKTSLLDYIRSSNVVAGESGGITQHIGAYEVTLDNGRSITFLDTPGHEAFTAMRARGAQVTDIVILVVAADDSVMPQTIEAINHSKAANVPIVVAINKIDKPEANPEKIRAQLSEAGVLVEDWGGEYQCQEISAKQGMGMHELMEKVLMEAEIRELKANFSREANSRGIIVESELDKGKGVISTVLVQRGFLKVGDPFVAGNTMGRVRALMDERGRRIKEAGPSQPVRVLGFEDLPQSGDEFVVMPTDKEAREIAQKRQIIRREHEFRRSTRVKLDSIARQIKEGLMKELSVIIKADTDGSIQALADGLMKIHNEEVKVQIIHQGVGQITETDVLLAAASDAIIIGFRVRPNVNAKRLAEKEDLDVRFYSVIYHVIEEIEQALEGMLSPELHEESLGSLEIRQVFRVPKIGNVGGCYMLEGKIFRDSKVRLLREGVQIYDGVLDSLKRFKDDVKEVDAGYECGLNLKGYGDIKVGDIVEAYRIVEKKRKL</sequence>
<protein>
    <recommendedName>
        <fullName evidence="2">Translation initiation factor IF-2</fullName>
    </recommendedName>
</protein>
<accession>B4S4S6</accession>
<evidence type="ECO:0000250" key="1"/>
<evidence type="ECO:0000255" key="2">
    <source>
        <dbReference type="HAMAP-Rule" id="MF_00100"/>
    </source>
</evidence>
<evidence type="ECO:0000256" key="3">
    <source>
        <dbReference type="SAM" id="MobiDB-lite"/>
    </source>
</evidence>
<proteinExistence type="inferred from homology"/>